<accession>Q941L3</accession>
<accession>Q9FH53</accession>
<organism>
    <name type="scientific">Arabidopsis thaliana</name>
    <name type="common">Mouse-ear cress</name>
    <dbReference type="NCBI Taxonomy" id="3702"/>
    <lineage>
        <taxon>Eukaryota</taxon>
        <taxon>Viridiplantae</taxon>
        <taxon>Streptophyta</taxon>
        <taxon>Embryophyta</taxon>
        <taxon>Tracheophyta</taxon>
        <taxon>Spermatophyta</taxon>
        <taxon>Magnoliopsida</taxon>
        <taxon>eudicotyledons</taxon>
        <taxon>Gunneridae</taxon>
        <taxon>Pentapetalae</taxon>
        <taxon>rosids</taxon>
        <taxon>malvids</taxon>
        <taxon>Brassicales</taxon>
        <taxon>Brassicaceae</taxon>
        <taxon>Camelineae</taxon>
        <taxon>Arabidopsis</taxon>
    </lineage>
</organism>
<comment type="function">
    <text evidence="6 8 10 11 12">Negative regulator of cell death and defense responses. Negative regulator of several R genes, including SNC1. May have effects in promoting growth and development. May function in membrane trafficking and in fusion of vesicles with plasma membrane at low temperature. Exhibits calcium-dependent phospholipid binding properties.</text>
</comment>
<comment type="cofactor">
    <cofactor evidence="1">
        <name>Ca(2+)</name>
        <dbReference type="ChEBI" id="CHEBI:29108"/>
    </cofactor>
</comment>
<comment type="subunit">
    <text evidence="9 13">Interacts (via VWA domain) with BAP1 and BAP2 (PubMed:17631528). Interacts with HSP70-1 and HSP70-2 (PubMed:26408532).</text>
</comment>
<comment type="subcellular location">
    <subcellularLocation>
        <location evidence="14">Cell membrane</location>
        <topology evidence="14">Lipid-anchor</topology>
    </subcellularLocation>
    <text evidence="3 12">Calcium enhances the association with membranes.</text>
</comment>
<comment type="tissue specificity">
    <text evidence="3 8 10">Expressed in roots and flowers and, at higher levels, in leaves and stems. Strongly expressed in growing tissues. Not detected in green siliques.</text>
</comment>
<comment type="induction">
    <text evidence="3 5 10">Down-regulated by high temperature. Up-regulated by pathogen, calcium, low humidity, avirulence gene product avrRpt2 and salicylic acid.</text>
</comment>
<comment type="domain">
    <text evidence="7">The N-terminus (1-116) is sufficient for plasma membrane localization. VWA domain fragments interfere with the function of the full-length protein, triggering a lesion-mimic phenotype.</text>
</comment>
<comment type="PTM">
    <text evidence="12">Based on mass spectrometry analysis, the N-peptide must be modified and there might be additional modifications other than myristoylation.</text>
</comment>
<comment type="disruption phenotype">
    <text evidence="3 4 5 6 8">Dwarf, twisted leaves and enhanced disease resistance in cv. Columbia when grown at 22 degrees Celsius. No visible phenotype when grown at 28 degrees Celsius, or in cv. Landsberg erecta, cv. No-0, and cv. Wassilewskija at any temperature. Humidity and temperature sensitive lesion mimic phenotype, accelerated hypersensitive response (HR) and increased disease resistance. Bon1 and bon2 double mutants, as well as bon1 and bon3 double mutants are seedling-lethal when grown at 22 degrees Celsius. bon1, bon2 and bon3 triple mutant is seedling-lethal at any temperature.</text>
</comment>
<comment type="miscellaneous">
    <text>Overexpression of BON1 has no effects on pathogen resistance.</text>
</comment>
<comment type="similarity">
    <text evidence="14">Belongs to the copine family.</text>
</comment>
<sequence length="578" mass="63120">MGNCCSDVASGAGATAGVGGSGSSAALGATNDALDYYLKSKGFNGLFSQIELSFSASNLRDRDVLSKSDPMVVVYQKEKDATLSEVFRSEVVLNSLAPKWIKKFIVAYHFETVQTLVFRVYDVDTKFQNSREEMLKLDEQQFLGEATCALSEIITKSTRTSTLELKRKDGFAPQAQPHHGKLIIHAEESLASKISTEIVFRCSNLESKDLFSKSDPFLVVSKIVEHGTPIPVSKTEVRKNDLNPIWKPVFLSVQQVGSKDSPVIIECSDFNSNGKHSLIGKVQKSLSDLEKLHLAGQGINFSLPTGAGQNKVLKSQLFVDKFTETVHHTFLEYLASGFELNFMVAIDFTASNGNPRLPDSLHYIDPSGRLNAYQRAIMDVGEVLQFYDSDKRFPAWGFGARPIDAPVSHCFNLNGSSSYSEVDGIQGIMTSYTSALFNVSLAGPTLFGPVINAAAMIASASLAQGSRKYYVLLIITDGVITDLQETKDALVSASDLPLSILIVGVGGADFKEMEILDADKGERLESSSGRLASRDIVQFVALRDVQYGEISVVQALLAELPSQFLTYMRIRNMKPIPP</sequence>
<keyword id="KW-0002">3D-structure</keyword>
<keyword id="KW-0106">Calcium</keyword>
<keyword id="KW-1003">Cell membrane</keyword>
<keyword id="KW-0449">Lipoprotein</keyword>
<keyword id="KW-0472">Membrane</keyword>
<keyword id="KW-0479">Metal-binding</keyword>
<keyword id="KW-0519">Myristate</keyword>
<keyword id="KW-0611">Plant defense</keyword>
<keyword id="KW-1185">Reference proteome</keyword>
<keyword id="KW-0677">Repeat</keyword>
<name>BON1_ARATH</name>
<feature type="initiator methionine" description="Removed" evidence="15">
    <location>
        <position position="1"/>
    </location>
</feature>
<feature type="chain" id="PRO_0000399468" description="Protein BONZAI 1">
    <location>
        <begin position="2"/>
        <end position="578"/>
    </location>
</feature>
<feature type="domain" description="C2 1" evidence="1">
    <location>
        <begin position="26"/>
        <end position="163"/>
    </location>
</feature>
<feature type="domain" description="C2 2" evidence="1">
    <location>
        <begin position="176"/>
        <end position="303"/>
    </location>
</feature>
<feature type="domain" description="VWFA" evidence="2">
    <location>
        <begin position="341"/>
        <end position="560"/>
    </location>
</feature>
<feature type="binding site" evidence="1">
    <location>
        <position position="63"/>
    </location>
    <ligand>
        <name>Ca(2+)</name>
        <dbReference type="ChEBI" id="CHEBI:29108"/>
    </ligand>
</feature>
<feature type="binding site" evidence="1">
    <location>
        <position position="69"/>
    </location>
    <ligand>
        <name>Ca(2+)</name>
        <dbReference type="ChEBI" id="CHEBI:29108"/>
    </ligand>
</feature>
<feature type="binding site" evidence="1">
    <location>
        <position position="122"/>
    </location>
    <ligand>
        <name>Ca(2+)</name>
        <dbReference type="ChEBI" id="CHEBI:29108"/>
    </ligand>
</feature>
<feature type="binding site" evidence="1">
    <location>
        <position position="124"/>
    </location>
    <ligand>
        <name>Ca(2+)</name>
        <dbReference type="ChEBI" id="CHEBI:29108"/>
    </ligand>
</feature>
<feature type="lipid moiety-binding region" description="N-myristoyl glycine" evidence="15">
    <location>
        <position position="2"/>
    </location>
</feature>
<feature type="mutagenesis site" description="Loss of function and altered targeting." evidence="12">
    <original>G</original>
    <variation>A</variation>
    <location>
        <position position="2"/>
    </location>
</feature>
<feature type="mutagenesis site" description="No effect. No effect; when associated with A-69. Loss of function; when associated with A-69; A-122 and A-124. Loss of function, but no effect on targeting; when associated with A-69; A-122; A-124; A-209; A-215 and A-269." evidence="12">
    <original>D</original>
    <variation>A</variation>
    <location>
        <position position="63"/>
    </location>
</feature>
<feature type="mutagenesis site" description="No effect; when associated with A-63. Loss of function; when associated with A-63; A-122 and A-124. Loss of function, but no effect on targeting; when associated with A-63; A-122; A-124; A-209; A-215 and A-269." evidence="12">
    <original>D</original>
    <variation>A</variation>
    <location>
        <position position="69"/>
    </location>
</feature>
<feature type="mutagenesis site" description="No effect; when associated with A-124. No effect; when associated with A-269. Loss of function; when associated with A-63; A-69 and A-124. Loss of function, but no effect on targeting; when associated with A-63; A-69; A-124; A-209; A-215 and A-269." evidence="12">
    <original>D</original>
    <variation>A</variation>
    <location>
        <position position="122"/>
    </location>
</feature>
<feature type="mutagenesis site" description="No effect; when associated with A-122. Loss of function; when associated with A-63; A-69 and A-122. Loss of function, but no effect on targeting; when associated with A-63; A-69; A-122; A-209; A-215 and A-269." evidence="12">
    <original>D</original>
    <variation>A</variation>
    <location>
        <position position="124"/>
    </location>
</feature>
<feature type="mutagenesis site" description="No effect; when associated with A-215. Loss of function; when associated with A-215 and A-269. Loss of function, but no effect on targeting; when associated with A-63; A-69; A-122; A-124; A-215 and A-269." evidence="12">
    <original>D</original>
    <variation>A</variation>
    <location>
        <position position="209"/>
    </location>
</feature>
<feature type="mutagenesis site" description="No effect; when associated with A-209. Loss of function; when associated with A-209 and A-269. Loss of function, but no effect on targeting; when associated with A-63; A-69; A-122; A-124; A-209 and A-269." evidence="12">
    <original>D</original>
    <variation>A</variation>
    <location>
        <position position="215"/>
    </location>
</feature>
<feature type="mutagenesis site" description="No effect. No effect; when associated with A-122. Loss of function; when associated with A-209 and A-215. Loss of function, but no effect on targeting; when associated with A-63; A-69; A-122; A-124; A-209 and A-215." evidence="12">
    <original>D</original>
    <variation>A</variation>
    <location>
        <position position="269"/>
    </location>
</feature>
<feature type="mutagenesis site" description="Loss of function and reduced interaction with BAP1; when associated with A-353." evidence="12">
    <original>A</original>
    <variation>V</variation>
    <location>
        <position position="350"/>
    </location>
</feature>
<feature type="mutagenesis site" description="Loss of function and reduced interaction with BAP1; when associated with V-350." evidence="12">
    <original>G</original>
    <variation>A</variation>
    <location>
        <position position="353"/>
    </location>
</feature>
<feature type="mutagenesis site" description="No effect." evidence="12">
    <original>K</original>
    <variation>A</variation>
    <location>
        <position position="391"/>
    </location>
</feature>
<feature type="mutagenesis site" description="Loss of function and loss of interaction with BAP1." evidence="12">
    <original>K</original>
    <variation>NAAIRS</variation>
    <location>
        <position position="391"/>
    </location>
</feature>
<feature type="sequence conflict" description="In Ref. 1; AAK98797." evidence="14" ref="1">
    <original>E</original>
    <variation>Q</variation>
    <location>
        <position position="421"/>
    </location>
</feature>
<feature type="strand" evidence="16">
    <location>
        <begin position="195"/>
        <end position="203"/>
    </location>
</feature>
<feature type="strand" evidence="16">
    <location>
        <begin position="216"/>
        <end position="222"/>
    </location>
</feature>
<feature type="strand" evidence="16">
    <location>
        <begin position="230"/>
        <end position="234"/>
    </location>
</feature>
<feature type="strand" evidence="16">
    <location>
        <begin position="249"/>
        <end position="252"/>
    </location>
</feature>
<feature type="helix" evidence="16">
    <location>
        <begin position="253"/>
        <end position="256"/>
    </location>
</feature>
<feature type="strand" evidence="16">
    <location>
        <begin position="263"/>
        <end position="269"/>
    </location>
</feature>
<feature type="strand" evidence="16">
    <location>
        <begin position="277"/>
        <end position="284"/>
    </location>
</feature>
<feature type="helix" evidence="16">
    <location>
        <begin position="286"/>
        <end position="295"/>
    </location>
</feature>
<feature type="strand" evidence="16">
    <location>
        <begin position="299"/>
        <end position="303"/>
    </location>
</feature>
<feature type="strand" evidence="16">
    <location>
        <begin position="306"/>
        <end position="309"/>
    </location>
</feature>
<feature type="strand" evidence="16">
    <location>
        <begin position="311"/>
        <end position="325"/>
    </location>
</feature>
<proteinExistence type="evidence at protein level"/>
<reference key="1">
    <citation type="journal article" date="2001" name="Genes Dev.">
        <title>Plant growth homeostasis is controlled by the Arabidopsis BON1 and BAP1 genes.</title>
        <authorList>
            <person name="Hua J."/>
            <person name="Grisafi P."/>
            <person name="Cheng S.H."/>
            <person name="Fink G.R."/>
        </authorList>
    </citation>
    <scope>NUCLEOTIDE SEQUENCE [MRNA]</scope>
    <scope>SUBCELLULAR LOCATION</scope>
    <scope>TISSUE SPECIFICITY</scope>
    <scope>INDUCTION BY HEAT</scope>
    <scope>INTERACTION WITH BAP1</scope>
    <scope>DISRUPTION PHENOTYPE</scope>
    <source>
        <strain>cv. Columbia</strain>
    </source>
</reference>
<reference key="2">
    <citation type="journal article" date="2001" name="Plant Cell">
        <title>A humidity-sensitive Arabidopsis copine mutant exhibits precocious cell death and increased disease resistance.</title>
        <authorList>
            <person name="Jambunathan N."/>
            <person name="Siani J.M."/>
            <person name="McNellis T.W."/>
        </authorList>
    </citation>
    <scope>NUCLEOTIDE SEQUENCE [MRNA]</scope>
    <scope>DISRUPTION PHENOTYPE</scope>
</reference>
<reference key="3">
    <citation type="journal article" date="2000" name="DNA Res.">
        <title>Structural analysis of Arabidopsis thaliana chromosome 5. X. Sequence features of the regions of 3,076,755 bp covered by sixty P1 and TAC clones.</title>
        <authorList>
            <person name="Sato S."/>
            <person name="Nakamura Y."/>
            <person name="Kaneko T."/>
            <person name="Katoh T."/>
            <person name="Asamizu E."/>
            <person name="Kotani H."/>
            <person name="Tabata S."/>
        </authorList>
    </citation>
    <scope>NUCLEOTIDE SEQUENCE [LARGE SCALE GENOMIC DNA]</scope>
    <source>
        <strain>cv. Columbia</strain>
    </source>
</reference>
<reference key="4">
    <citation type="journal article" date="2017" name="Plant J.">
        <title>Araport11: a complete reannotation of the Arabidopsis thaliana reference genome.</title>
        <authorList>
            <person name="Cheng C.Y."/>
            <person name="Krishnakumar V."/>
            <person name="Chan A.P."/>
            <person name="Thibaud-Nissen F."/>
            <person name="Schobel S."/>
            <person name="Town C.D."/>
        </authorList>
    </citation>
    <scope>GENOME REANNOTATION</scope>
    <source>
        <strain>cv. Columbia</strain>
    </source>
</reference>
<reference key="5">
    <citation type="journal article" date="2003" name="Science">
        <title>Empirical analysis of transcriptional activity in the Arabidopsis genome.</title>
        <authorList>
            <person name="Yamada K."/>
            <person name="Lim J."/>
            <person name="Dale J.M."/>
            <person name="Chen H."/>
            <person name="Shinn P."/>
            <person name="Palm C.J."/>
            <person name="Southwick A.M."/>
            <person name="Wu H.C."/>
            <person name="Kim C.J."/>
            <person name="Nguyen M."/>
            <person name="Pham P.K."/>
            <person name="Cheuk R.F."/>
            <person name="Karlin-Newmann G."/>
            <person name="Liu S.X."/>
            <person name="Lam B."/>
            <person name="Sakano H."/>
            <person name="Wu T."/>
            <person name="Yu G."/>
            <person name="Miranda M."/>
            <person name="Quach H.L."/>
            <person name="Tripp M."/>
            <person name="Chang C.H."/>
            <person name="Lee J.M."/>
            <person name="Toriumi M.J."/>
            <person name="Chan M.M."/>
            <person name="Tang C.C."/>
            <person name="Onodera C.S."/>
            <person name="Deng J.M."/>
            <person name="Akiyama K."/>
            <person name="Ansari Y."/>
            <person name="Arakawa T."/>
            <person name="Banh J."/>
            <person name="Banno F."/>
            <person name="Bowser L."/>
            <person name="Brooks S.Y."/>
            <person name="Carninci P."/>
            <person name="Chao Q."/>
            <person name="Choy N."/>
            <person name="Enju A."/>
            <person name="Goldsmith A.D."/>
            <person name="Gurjal M."/>
            <person name="Hansen N.F."/>
            <person name="Hayashizaki Y."/>
            <person name="Johnson-Hopson C."/>
            <person name="Hsuan V.W."/>
            <person name="Iida K."/>
            <person name="Karnes M."/>
            <person name="Khan S."/>
            <person name="Koesema E."/>
            <person name="Ishida J."/>
            <person name="Jiang P.X."/>
            <person name="Jones T."/>
            <person name="Kawai J."/>
            <person name="Kamiya A."/>
            <person name="Meyers C."/>
            <person name="Nakajima M."/>
            <person name="Narusaka M."/>
            <person name="Seki M."/>
            <person name="Sakurai T."/>
            <person name="Satou M."/>
            <person name="Tamse R."/>
            <person name="Vaysberg M."/>
            <person name="Wallender E.K."/>
            <person name="Wong C."/>
            <person name="Yamamura Y."/>
            <person name="Yuan S."/>
            <person name="Shinozaki K."/>
            <person name="Davis R.W."/>
            <person name="Theologis A."/>
            <person name="Ecker J.R."/>
        </authorList>
    </citation>
    <scope>NUCLEOTIDE SEQUENCE [LARGE SCALE MRNA]</scope>
    <source>
        <strain>cv. Columbia</strain>
    </source>
</reference>
<reference key="6">
    <citation type="submission" date="2002-03" db="EMBL/GenBank/DDBJ databases">
        <title>Full-length cDNA from Arabidopsis thaliana.</title>
        <authorList>
            <person name="Brover V.V."/>
            <person name="Troukhan M.E."/>
            <person name="Alexandrov N.A."/>
            <person name="Lu Y.-P."/>
            <person name="Flavell R.B."/>
            <person name="Feldmann K.A."/>
        </authorList>
    </citation>
    <scope>NUCLEOTIDE SEQUENCE [LARGE SCALE MRNA]</scope>
</reference>
<reference key="7">
    <citation type="journal article" date="2003" name="Plant Physiol.">
        <title>Regulation of Arabidopsis COPINE 1 gene expression in response to pathogens and abiotic stimuli.</title>
        <authorList>
            <person name="Jambunathan N."/>
            <person name="McNellis T.W."/>
        </authorList>
    </citation>
    <scope>INDUCTION BY PATHOGEN; LOW HUMIDITY; AVIRULENCE GENE PRODUCT AND SALICYLIC ACID</scope>
    <scope>DISRUPTION PHENOTYPE</scope>
</reference>
<reference key="8">
    <citation type="journal article" date="2004" name="Plant Cell">
        <title>A haplotype-specific Resistance gene regulated by BONZAI1 mediates temperature-dependent growth control in Arabidopsis.</title>
        <authorList>
            <person name="Yang S."/>
            <person name="Hua J."/>
        </authorList>
    </citation>
    <scope>FUNCTION</scope>
    <scope>DISRUPTION PHENOTYPE</scope>
</reference>
<reference key="9">
    <citation type="journal article" date="2005" name="Planta">
        <title>Transgenic expression of the von Willebrand A domain of the BONZAI 1/COPINE 1 protein triggers a lesion-mimic phenotype in Arabidopsis.</title>
        <authorList>
            <person name="Liu J."/>
            <person name="Jambunathan N."/>
            <person name="McNellis T.W."/>
        </authorList>
    </citation>
    <scope>DOMAIN</scope>
</reference>
<reference key="10">
    <citation type="journal article" date="2006" name="Plant J.">
        <title>The BON/CPN gene family represses cell death and promotes cell growth in Arabidopsis.</title>
        <authorList>
            <person name="Yang S."/>
            <person name="Yang H."/>
            <person name="Grisafi P."/>
            <person name="Sanchatjate S."/>
            <person name="Fink G.R."/>
            <person name="Sun Q."/>
            <person name="Hua J."/>
        </authorList>
    </citation>
    <scope>FUNCTION</scope>
    <scope>DISRUPTION PHENOTYPE</scope>
    <scope>TISSUE SPECIFICITY</scope>
    <scope>GENE FAMILY</scope>
    <scope>NOMENCLATURE</scope>
</reference>
<reference key="11">
    <citation type="journal article" date="2007" name="Plant Physiol.">
        <title>The Arabidopsis BAP1 and BAP2 genes are general inhibitors of programmed cell death.</title>
        <authorList>
            <person name="Yang H."/>
            <person name="Yang S."/>
            <person name="Li Y."/>
            <person name="Hua J."/>
        </authorList>
    </citation>
    <scope>INTERACTION WITH BAP1 AND BAP2</scope>
</reference>
<reference key="12">
    <citation type="journal article" date="2009" name="Mol. Plant Microbe Interact.">
        <title>Multiple R-like genes are negatively regulated by BON1 and BON3 in arabidopsis.</title>
        <authorList>
            <person name="Li Y."/>
            <person name="Pennington B.O."/>
            <person name="Hua J."/>
        </authorList>
    </citation>
    <scope>FUNCTION</scope>
</reference>
<reference key="13">
    <citation type="journal article" date="2009" name="Plant Mol. Biol.">
        <title>Evidence that the BONZAI1/COPINE1 protein is a calcium- and pathogen-responsive defense suppressor.</title>
        <authorList>
            <person name="Lee T.F."/>
            <person name="McNellis T.W."/>
        </authorList>
    </citation>
    <scope>FUNCTION</scope>
    <scope>TISSUE SPECIFICITY</scope>
    <scope>INDUCTION BY PATHOGEN AND CALCIUM</scope>
</reference>
<reference key="14">
    <citation type="journal article" date="2010" name="J. Biol. Chem.">
        <title>Requirement of calcium binding, myristoylation, and protein-protein interaction for the copine BON1 function in Arabidopsis.</title>
        <authorList>
            <person name="Li Y."/>
            <person name="Gou M."/>
            <person name="Sun Q."/>
            <person name="Hua J."/>
        </authorList>
    </citation>
    <scope>FUNCTION</scope>
    <scope>MYRISTOYLATION AT GLY-2</scope>
    <scope>MUTAGENESIS OF GLY-2; ASP-63; ASP-69; ASP-122; ASP-124; ASP-209; ASP-215; ASP-269; ALA-350; GLY-353 AND LYS-391</scope>
    <scope>SUBCELLULAR LOCATION</scope>
    <scope>IDENTIFICATION BY MASS SPECTROMETRY</scope>
</reference>
<reference key="15">
    <citation type="journal article" date="2015" name="Plant Physiol.">
        <title>Opposing effects on two phases of defense responses from concerted actions of HEAT SHOCK COGNATE70 and BONZAI1 in Arabidopsis.</title>
        <authorList>
            <person name="Gou M."/>
            <person name="Zhang Z."/>
            <person name="Zhang N."/>
            <person name="Huang Q."/>
            <person name="Monaghan J."/>
            <person name="Yang H."/>
            <person name="Shi Z."/>
            <person name="Zipfel C."/>
            <person name="Hua J."/>
        </authorList>
    </citation>
    <scope>INTERACTION WITH HSP70-1 AND HSP70-2</scope>
</reference>
<protein>
    <recommendedName>
        <fullName>Protein BONZAI 1</fullName>
    </recommendedName>
    <alternativeName>
        <fullName>COPINE 1</fullName>
    </alternativeName>
</protein>
<gene>
    <name type="primary">BON1</name>
    <name type="synonym">CPN1</name>
    <name type="ordered locus">At5g61900</name>
    <name type="ORF">K22G18.2</name>
</gene>
<dbReference type="EMBL" id="AY045764">
    <property type="protein sequence ID" value="AAK98797.1"/>
    <property type="molecule type" value="mRNA"/>
</dbReference>
<dbReference type="EMBL" id="AB022212">
    <property type="protein sequence ID" value="BAB08876.1"/>
    <property type="molecule type" value="Genomic_DNA"/>
</dbReference>
<dbReference type="EMBL" id="CP002688">
    <property type="protein sequence ID" value="AED97534.1"/>
    <property type="molecule type" value="Genomic_DNA"/>
</dbReference>
<dbReference type="EMBL" id="CP002688">
    <property type="protein sequence ID" value="AED97535.1"/>
    <property type="molecule type" value="Genomic_DNA"/>
</dbReference>
<dbReference type="EMBL" id="AY062824">
    <property type="protein sequence ID" value="AAL32902.1"/>
    <property type="molecule type" value="mRNA"/>
</dbReference>
<dbReference type="EMBL" id="BT010555">
    <property type="protein sequence ID" value="AAQ65178.1"/>
    <property type="molecule type" value="mRNA"/>
</dbReference>
<dbReference type="EMBL" id="AY085339">
    <property type="protein sequence ID" value="AAM62570.1"/>
    <property type="molecule type" value="mRNA"/>
</dbReference>
<dbReference type="RefSeq" id="NP_568944.1">
    <property type="nucleotide sequence ID" value="NM_125583.4"/>
</dbReference>
<dbReference type="RefSeq" id="NP_974977.1">
    <property type="nucleotide sequence ID" value="NM_203248.2"/>
</dbReference>
<dbReference type="PDB" id="6KXT">
    <property type="method" value="X-ray"/>
    <property type="resolution" value="1.25 A"/>
    <property type="chains" value="A=192-326"/>
</dbReference>
<dbReference type="PDBsum" id="6KXT"/>
<dbReference type="SMR" id="Q941L3"/>
<dbReference type="BioGRID" id="21555">
    <property type="interactions" value="7"/>
</dbReference>
<dbReference type="FunCoup" id="Q941L3">
    <property type="interactions" value="71"/>
</dbReference>
<dbReference type="IntAct" id="Q941L3">
    <property type="interactions" value="2"/>
</dbReference>
<dbReference type="STRING" id="3702.Q941L3"/>
<dbReference type="iPTMnet" id="Q941L3"/>
<dbReference type="SwissPalm" id="Q941L3"/>
<dbReference type="PaxDb" id="3702-AT5G61900.3"/>
<dbReference type="EnsemblPlants" id="AT5G61900.1">
    <property type="protein sequence ID" value="AT5G61900.1"/>
    <property type="gene ID" value="AT5G61900"/>
</dbReference>
<dbReference type="EnsemblPlants" id="AT5G61900.3">
    <property type="protein sequence ID" value="AT5G61900.3"/>
    <property type="gene ID" value="AT5G61900"/>
</dbReference>
<dbReference type="GeneID" id="836311"/>
<dbReference type="Gramene" id="AT5G61900.1">
    <property type="protein sequence ID" value="AT5G61900.1"/>
    <property type="gene ID" value="AT5G61900"/>
</dbReference>
<dbReference type="Gramene" id="AT5G61900.3">
    <property type="protein sequence ID" value="AT5G61900.3"/>
    <property type="gene ID" value="AT5G61900"/>
</dbReference>
<dbReference type="KEGG" id="ath:AT5G61900"/>
<dbReference type="Araport" id="AT5G61900"/>
<dbReference type="TAIR" id="AT5G61900">
    <property type="gene designation" value="BON1"/>
</dbReference>
<dbReference type="eggNOG" id="KOG1327">
    <property type="taxonomic scope" value="Eukaryota"/>
</dbReference>
<dbReference type="HOGENOM" id="CLU_020452_3_1_1"/>
<dbReference type="InParanoid" id="Q941L3"/>
<dbReference type="PhylomeDB" id="Q941L3"/>
<dbReference type="PRO" id="PR:Q941L3"/>
<dbReference type="Proteomes" id="UP000006548">
    <property type="component" value="Chromosome 5"/>
</dbReference>
<dbReference type="GO" id="GO:0005886">
    <property type="term" value="C:plasma membrane"/>
    <property type="evidence" value="ECO:0000314"/>
    <property type="project" value="TAIR"/>
</dbReference>
<dbReference type="GO" id="GO:0009506">
    <property type="term" value="C:plasmodesma"/>
    <property type="evidence" value="ECO:0007005"/>
    <property type="project" value="TAIR"/>
</dbReference>
<dbReference type="GO" id="GO:0009536">
    <property type="term" value="C:plastid"/>
    <property type="evidence" value="ECO:0007005"/>
    <property type="project" value="TAIR"/>
</dbReference>
<dbReference type="GO" id="GO:0005544">
    <property type="term" value="F:calcium-dependent phospholipid binding"/>
    <property type="evidence" value="ECO:0000314"/>
    <property type="project" value="TAIR"/>
</dbReference>
<dbReference type="GO" id="GO:0046872">
    <property type="term" value="F:metal ion binding"/>
    <property type="evidence" value="ECO:0007669"/>
    <property type="project" value="UniProtKB-KW"/>
</dbReference>
<dbReference type="GO" id="GO:0006952">
    <property type="term" value="P:defense response"/>
    <property type="evidence" value="ECO:0007669"/>
    <property type="project" value="UniProtKB-KW"/>
</dbReference>
<dbReference type="GO" id="GO:0045793">
    <property type="term" value="P:positive regulation of cell size"/>
    <property type="evidence" value="ECO:0000315"/>
    <property type="project" value="TAIR"/>
</dbReference>
<dbReference type="GO" id="GO:0009270">
    <property type="term" value="P:response to humidity"/>
    <property type="evidence" value="ECO:0000315"/>
    <property type="project" value="TAIR"/>
</dbReference>
<dbReference type="GO" id="GO:0009266">
    <property type="term" value="P:response to temperature stimulus"/>
    <property type="evidence" value="ECO:0000270"/>
    <property type="project" value="TAIR"/>
</dbReference>
<dbReference type="CDD" id="cd04048">
    <property type="entry name" value="C2A_Copine"/>
    <property type="match status" value="1"/>
</dbReference>
<dbReference type="CDD" id="cd04047">
    <property type="entry name" value="C2B_Copine"/>
    <property type="match status" value="1"/>
</dbReference>
<dbReference type="CDD" id="cd01459">
    <property type="entry name" value="vWA_copine_like"/>
    <property type="match status" value="1"/>
</dbReference>
<dbReference type="FunFam" id="2.60.40.150:FF:000168">
    <property type="entry name" value="Protein BONZAI 1"/>
    <property type="match status" value="1"/>
</dbReference>
<dbReference type="FunFam" id="2.60.40.150:FF:000197">
    <property type="entry name" value="Protein BONZAI 1 isoform A"/>
    <property type="match status" value="1"/>
</dbReference>
<dbReference type="Gene3D" id="2.60.40.150">
    <property type="entry name" value="C2 domain"/>
    <property type="match status" value="2"/>
</dbReference>
<dbReference type="InterPro" id="IPR000008">
    <property type="entry name" value="C2_dom"/>
</dbReference>
<dbReference type="InterPro" id="IPR035892">
    <property type="entry name" value="C2_domain_sf"/>
</dbReference>
<dbReference type="InterPro" id="IPR037768">
    <property type="entry name" value="C2B_Copine"/>
</dbReference>
<dbReference type="InterPro" id="IPR045052">
    <property type="entry name" value="Copine"/>
</dbReference>
<dbReference type="InterPro" id="IPR010734">
    <property type="entry name" value="Copine_C"/>
</dbReference>
<dbReference type="InterPro" id="IPR002035">
    <property type="entry name" value="VWF_A"/>
</dbReference>
<dbReference type="InterPro" id="IPR036465">
    <property type="entry name" value="vWFA_dom_sf"/>
</dbReference>
<dbReference type="PANTHER" id="PTHR10857:SF106">
    <property type="entry name" value="C2 DOMAIN-CONTAINING PROTEIN"/>
    <property type="match status" value="1"/>
</dbReference>
<dbReference type="PANTHER" id="PTHR10857">
    <property type="entry name" value="COPINE"/>
    <property type="match status" value="1"/>
</dbReference>
<dbReference type="Pfam" id="PF00168">
    <property type="entry name" value="C2"/>
    <property type="match status" value="2"/>
</dbReference>
<dbReference type="Pfam" id="PF07002">
    <property type="entry name" value="Copine"/>
    <property type="match status" value="1"/>
</dbReference>
<dbReference type="SMART" id="SM00239">
    <property type="entry name" value="C2"/>
    <property type="match status" value="2"/>
</dbReference>
<dbReference type="SMART" id="SM00327">
    <property type="entry name" value="VWA"/>
    <property type="match status" value="1"/>
</dbReference>
<dbReference type="SUPFAM" id="SSF49562">
    <property type="entry name" value="C2 domain (Calcium/lipid-binding domain, CaLB)"/>
    <property type="match status" value="2"/>
</dbReference>
<dbReference type="SUPFAM" id="SSF53300">
    <property type="entry name" value="vWA-like"/>
    <property type="match status" value="1"/>
</dbReference>
<dbReference type="PROSITE" id="PS50004">
    <property type="entry name" value="C2"/>
    <property type="match status" value="2"/>
</dbReference>
<dbReference type="PROSITE" id="PS50234">
    <property type="entry name" value="VWFA"/>
    <property type="match status" value="1"/>
</dbReference>
<evidence type="ECO:0000255" key="1">
    <source>
        <dbReference type="PROSITE-ProRule" id="PRU00041"/>
    </source>
</evidence>
<evidence type="ECO:0000255" key="2">
    <source>
        <dbReference type="PROSITE-ProRule" id="PRU00219"/>
    </source>
</evidence>
<evidence type="ECO:0000269" key="3">
    <source>
    </source>
</evidence>
<evidence type="ECO:0000269" key="4">
    <source>
    </source>
</evidence>
<evidence type="ECO:0000269" key="5">
    <source>
    </source>
</evidence>
<evidence type="ECO:0000269" key="6">
    <source>
    </source>
</evidence>
<evidence type="ECO:0000269" key="7">
    <source>
    </source>
</evidence>
<evidence type="ECO:0000269" key="8">
    <source>
    </source>
</evidence>
<evidence type="ECO:0000269" key="9">
    <source>
    </source>
</evidence>
<evidence type="ECO:0000269" key="10">
    <source>
    </source>
</evidence>
<evidence type="ECO:0000269" key="11">
    <source>
    </source>
</evidence>
<evidence type="ECO:0000269" key="12">
    <source>
    </source>
</evidence>
<evidence type="ECO:0000269" key="13">
    <source>
    </source>
</evidence>
<evidence type="ECO:0000305" key="14"/>
<evidence type="ECO:0000305" key="15">
    <source>
    </source>
</evidence>
<evidence type="ECO:0007829" key="16">
    <source>
        <dbReference type="PDB" id="6KXT"/>
    </source>
</evidence>